<keyword id="KW-0067">ATP-binding</keyword>
<keyword id="KW-0315">Glutamine amidotransferase</keyword>
<keyword id="KW-0332">GMP biosynthesis</keyword>
<keyword id="KW-0436">Ligase</keyword>
<keyword id="KW-0547">Nucleotide-binding</keyword>
<keyword id="KW-0658">Purine biosynthesis</keyword>
<organism>
    <name type="scientific">Bacillus cereus (strain 03BB102)</name>
    <dbReference type="NCBI Taxonomy" id="572264"/>
    <lineage>
        <taxon>Bacteria</taxon>
        <taxon>Bacillati</taxon>
        <taxon>Bacillota</taxon>
        <taxon>Bacilli</taxon>
        <taxon>Bacillales</taxon>
        <taxon>Bacillaceae</taxon>
        <taxon>Bacillus</taxon>
        <taxon>Bacillus cereus group</taxon>
    </lineage>
</organism>
<proteinExistence type="inferred from homology"/>
<feature type="chain" id="PRO_1000133351" description="GMP synthase [glutamine-hydrolyzing]">
    <location>
        <begin position="1"/>
        <end position="515"/>
    </location>
</feature>
<feature type="domain" description="Glutamine amidotransferase type-1" evidence="1">
    <location>
        <begin position="10"/>
        <end position="200"/>
    </location>
</feature>
<feature type="domain" description="GMPS ATP-PPase" evidence="1">
    <location>
        <begin position="201"/>
        <end position="390"/>
    </location>
</feature>
<feature type="active site" description="Nucleophile" evidence="1">
    <location>
        <position position="87"/>
    </location>
</feature>
<feature type="active site" evidence="1">
    <location>
        <position position="174"/>
    </location>
</feature>
<feature type="active site" evidence="1">
    <location>
        <position position="176"/>
    </location>
</feature>
<feature type="binding site" evidence="1">
    <location>
        <begin position="228"/>
        <end position="234"/>
    </location>
    <ligand>
        <name>ATP</name>
        <dbReference type="ChEBI" id="CHEBI:30616"/>
    </ligand>
</feature>
<reference key="1">
    <citation type="submission" date="2009-02" db="EMBL/GenBank/DDBJ databases">
        <title>Genome sequence of Bacillus cereus 03BB102.</title>
        <authorList>
            <person name="Dodson R.J."/>
            <person name="Jackson P."/>
            <person name="Munk A.C."/>
            <person name="Brettin T."/>
            <person name="Bruce D."/>
            <person name="Detter C."/>
            <person name="Tapia R."/>
            <person name="Han C."/>
            <person name="Sutton G."/>
            <person name="Sims D."/>
        </authorList>
    </citation>
    <scope>NUCLEOTIDE SEQUENCE [LARGE SCALE GENOMIC DNA]</scope>
    <source>
        <strain>03BB102</strain>
    </source>
</reference>
<evidence type="ECO:0000255" key="1">
    <source>
        <dbReference type="HAMAP-Rule" id="MF_00344"/>
    </source>
</evidence>
<gene>
    <name evidence="1" type="primary">guaA</name>
    <name type="ordered locus">BCA_0324</name>
</gene>
<accession>C1EUB4</accession>
<dbReference type="EC" id="6.3.5.2" evidence="1"/>
<dbReference type="EMBL" id="CP001407">
    <property type="protein sequence ID" value="ACO27623.1"/>
    <property type="molecule type" value="Genomic_DNA"/>
</dbReference>
<dbReference type="SMR" id="C1EUB4"/>
<dbReference type="KEGG" id="bcx:BCA_0324"/>
<dbReference type="PATRIC" id="fig|572264.18.peg.331"/>
<dbReference type="UniPathway" id="UPA00189">
    <property type="reaction ID" value="UER00296"/>
</dbReference>
<dbReference type="Proteomes" id="UP000002210">
    <property type="component" value="Chromosome"/>
</dbReference>
<dbReference type="GO" id="GO:0005829">
    <property type="term" value="C:cytosol"/>
    <property type="evidence" value="ECO:0007669"/>
    <property type="project" value="TreeGrafter"/>
</dbReference>
<dbReference type="GO" id="GO:0005524">
    <property type="term" value="F:ATP binding"/>
    <property type="evidence" value="ECO:0007669"/>
    <property type="project" value="UniProtKB-UniRule"/>
</dbReference>
<dbReference type="GO" id="GO:0003921">
    <property type="term" value="F:GMP synthase activity"/>
    <property type="evidence" value="ECO:0007669"/>
    <property type="project" value="InterPro"/>
</dbReference>
<dbReference type="CDD" id="cd01742">
    <property type="entry name" value="GATase1_GMP_Synthase"/>
    <property type="match status" value="1"/>
</dbReference>
<dbReference type="CDD" id="cd01997">
    <property type="entry name" value="GMP_synthase_C"/>
    <property type="match status" value="1"/>
</dbReference>
<dbReference type="FunFam" id="3.30.300.10:FF:000002">
    <property type="entry name" value="GMP synthase [glutamine-hydrolyzing]"/>
    <property type="match status" value="1"/>
</dbReference>
<dbReference type="FunFam" id="3.40.50.620:FF:000001">
    <property type="entry name" value="GMP synthase [glutamine-hydrolyzing]"/>
    <property type="match status" value="1"/>
</dbReference>
<dbReference type="FunFam" id="3.40.50.880:FF:000001">
    <property type="entry name" value="GMP synthase [glutamine-hydrolyzing]"/>
    <property type="match status" value="1"/>
</dbReference>
<dbReference type="Gene3D" id="3.30.300.10">
    <property type="match status" value="1"/>
</dbReference>
<dbReference type="Gene3D" id="3.40.50.880">
    <property type="match status" value="1"/>
</dbReference>
<dbReference type="Gene3D" id="3.40.50.620">
    <property type="entry name" value="HUPs"/>
    <property type="match status" value="1"/>
</dbReference>
<dbReference type="HAMAP" id="MF_00344">
    <property type="entry name" value="GMP_synthase"/>
    <property type="match status" value="1"/>
</dbReference>
<dbReference type="InterPro" id="IPR029062">
    <property type="entry name" value="Class_I_gatase-like"/>
</dbReference>
<dbReference type="InterPro" id="IPR017926">
    <property type="entry name" value="GATASE"/>
</dbReference>
<dbReference type="InterPro" id="IPR001674">
    <property type="entry name" value="GMP_synth_C"/>
</dbReference>
<dbReference type="InterPro" id="IPR004739">
    <property type="entry name" value="GMP_synth_GATase"/>
</dbReference>
<dbReference type="InterPro" id="IPR022955">
    <property type="entry name" value="GMP_synthase"/>
</dbReference>
<dbReference type="InterPro" id="IPR025777">
    <property type="entry name" value="GMPS_ATP_PPase_dom"/>
</dbReference>
<dbReference type="InterPro" id="IPR022310">
    <property type="entry name" value="NAD/GMP_synthase"/>
</dbReference>
<dbReference type="InterPro" id="IPR014729">
    <property type="entry name" value="Rossmann-like_a/b/a_fold"/>
</dbReference>
<dbReference type="NCBIfam" id="TIGR00884">
    <property type="entry name" value="guaA_Cterm"/>
    <property type="match status" value="1"/>
</dbReference>
<dbReference type="NCBIfam" id="TIGR00888">
    <property type="entry name" value="guaA_Nterm"/>
    <property type="match status" value="1"/>
</dbReference>
<dbReference type="NCBIfam" id="NF000848">
    <property type="entry name" value="PRK00074.1"/>
    <property type="match status" value="1"/>
</dbReference>
<dbReference type="PANTHER" id="PTHR11922:SF2">
    <property type="entry name" value="GMP SYNTHASE [GLUTAMINE-HYDROLYZING]"/>
    <property type="match status" value="1"/>
</dbReference>
<dbReference type="PANTHER" id="PTHR11922">
    <property type="entry name" value="GMP SYNTHASE-RELATED"/>
    <property type="match status" value="1"/>
</dbReference>
<dbReference type="Pfam" id="PF00117">
    <property type="entry name" value="GATase"/>
    <property type="match status" value="1"/>
</dbReference>
<dbReference type="Pfam" id="PF00958">
    <property type="entry name" value="GMP_synt_C"/>
    <property type="match status" value="1"/>
</dbReference>
<dbReference type="Pfam" id="PF02540">
    <property type="entry name" value="NAD_synthase"/>
    <property type="match status" value="1"/>
</dbReference>
<dbReference type="PRINTS" id="PR00097">
    <property type="entry name" value="ANTSNTHASEII"/>
</dbReference>
<dbReference type="PRINTS" id="PR00099">
    <property type="entry name" value="CPSGATASE"/>
</dbReference>
<dbReference type="PRINTS" id="PR00096">
    <property type="entry name" value="GATASE"/>
</dbReference>
<dbReference type="SUPFAM" id="SSF52402">
    <property type="entry name" value="Adenine nucleotide alpha hydrolases-like"/>
    <property type="match status" value="1"/>
</dbReference>
<dbReference type="SUPFAM" id="SSF52317">
    <property type="entry name" value="Class I glutamine amidotransferase-like"/>
    <property type="match status" value="1"/>
</dbReference>
<dbReference type="SUPFAM" id="SSF54810">
    <property type="entry name" value="GMP synthetase C-terminal dimerisation domain"/>
    <property type="match status" value="1"/>
</dbReference>
<dbReference type="PROSITE" id="PS51273">
    <property type="entry name" value="GATASE_TYPE_1"/>
    <property type="match status" value="1"/>
</dbReference>
<dbReference type="PROSITE" id="PS51553">
    <property type="entry name" value="GMPS_ATP_PPASE"/>
    <property type="match status" value="1"/>
</dbReference>
<name>GUAA_BACC3</name>
<comment type="function">
    <text evidence="1">Catalyzes the synthesis of GMP from XMP.</text>
</comment>
<comment type="catalytic activity">
    <reaction evidence="1">
        <text>XMP + L-glutamine + ATP + H2O = GMP + L-glutamate + AMP + diphosphate + 2 H(+)</text>
        <dbReference type="Rhea" id="RHEA:11680"/>
        <dbReference type="ChEBI" id="CHEBI:15377"/>
        <dbReference type="ChEBI" id="CHEBI:15378"/>
        <dbReference type="ChEBI" id="CHEBI:29985"/>
        <dbReference type="ChEBI" id="CHEBI:30616"/>
        <dbReference type="ChEBI" id="CHEBI:33019"/>
        <dbReference type="ChEBI" id="CHEBI:57464"/>
        <dbReference type="ChEBI" id="CHEBI:58115"/>
        <dbReference type="ChEBI" id="CHEBI:58359"/>
        <dbReference type="ChEBI" id="CHEBI:456215"/>
        <dbReference type="EC" id="6.3.5.2"/>
    </reaction>
</comment>
<comment type="pathway">
    <text evidence="1">Purine metabolism; GMP biosynthesis; GMP from XMP (L-Gln route): step 1/1.</text>
</comment>
<comment type="subunit">
    <text evidence="1">Homodimer.</text>
</comment>
<sequence length="515" mass="57579">MIILKKQHDTIIVLDFGSQYNQLIARRIREFGVYSELHPHTITAEEIKAMNPKGIIFSGGPNSVYGEGALHCDEKIFDLGLPIFGICYGMQLMTQQFGGTVERANHREYGKAVLKVENESKLYANLPEEQVVWMSHGDLVTGLPEGFVVDATSESCPIAGMSNEAKNLYGVQFHPEVRHSEHGNDLIKNFVFGVCGCSEGWNMENFIEVELEKIRETVGDKKVLCALSGGVDSSVVAVLIHKAIGDQLTCIFVDHGLLRKGEAEGVMKTFSEGFHMNVIKVDAKERFMNKLKGVEDPEQKRKIIGNEFIYVFDDEASKLEGMDFLAQGTLYTDIVESGTATAQTIKSHHNVGGLPEDMQFKLIEPLNTLFKDEVRVLGSELGIPDEIVWRQPFPGPGLGIRVLGEITEEKLEIVRESDAILREEIIKAGLDREIWQYFTALPGMRSVGVMGDERTYDYTVGIRAVTSIDGMTADWARIPWDVLEKISVRIVNEVKHVNRIVYDVTSKPPATIEWE</sequence>
<protein>
    <recommendedName>
        <fullName evidence="1">GMP synthase [glutamine-hydrolyzing]</fullName>
        <ecNumber evidence="1">6.3.5.2</ecNumber>
    </recommendedName>
    <alternativeName>
        <fullName evidence="1">GMP synthetase</fullName>
    </alternativeName>
    <alternativeName>
        <fullName evidence="1">Glutamine amidotransferase</fullName>
    </alternativeName>
</protein>